<organism>
    <name type="scientific">Sendai virus (strain Ohita)</name>
    <name type="common">SeV</name>
    <dbReference type="NCBI Taxonomy" id="302272"/>
    <lineage>
        <taxon>Viruses</taxon>
        <taxon>Riboviria</taxon>
        <taxon>Orthornavirae</taxon>
        <taxon>Negarnaviricota</taxon>
        <taxon>Haploviricotina</taxon>
        <taxon>Monjiviricetes</taxon>
        <taxon>Mononegavirales</taxon>
        <taxon>Paramyxoviridae</taxon>
        <taxon>Feraresvirinae</taxon>
        <taxon>Respirovirus</taxon>
        <taxon>Respirovirus muris</taxon>
    </lineage>
</organism>
<protein>
    <recommendedName>
        <fullName>Matrix protein</fullName>
        <shortName>M protein</shortName>
    </recommendedName>
</protein>
<dbReference type="EMBL" id="AB005795">
    <property type="protein sequence ID" value="BAA24389.1"/>
    <property type="molecule type" value="Genomic_RNA"/>
</dbReference>
<dbReference type="EMBL" id="AB005796">
    <property type="protein sequence ID" value="BAA24398.1"/>
    <property type="molecule type" value="Genomic_RNA"/>
</dbReference>
<dbReference type="RefSeq" id="NP_056876.1">
    <property type="nucleotide sequence ID" value="NC_001552.1"/>
</dbReference>
<dbReference type="SMR" id="O57299"/>
<dbReference type="GeneID" id="1489778"/>
<dbReference type="KEGG" id="vg:1489778"/>
<dbReference type="Proteomes" id="UP000006563">
    <property type="component" value="Genome"/>
</dbReference>
<dbReference type="Proteomes" id="UP000007311">
    <property type="component" value="Segment"/>
</dbReference>
<dbReference type="GO" id="GO:0030430">
    <property type="term" value="C:host cell cytoplasm"/>
    <property type="evidence" value="ECO:0007669"/>
    <property type="project" value="UniProtKB-SubCell"/>
</dbReference>
<dbReference type="GO" id="GO:0020002">
    <property type="term" value="C:host cell plasma membrane"/>
    <property type="evidence" value="ECO:0007669"/>
    <property type="project" value="UniProtKB-SubCell"/>
</dbReference>
<dbReference type="GO" id="GO:0016020">
    <property type="term" value="C:membrane"/>
    <property type="evidence" value="ECO:0007669"/>
    <property type="project" value="UniProtKB-KW"/>
</dbReference>
<dbReference type="GO" id="GO:0044423">
    <property type="term" value="C:virion component"/>
    <property type="evidence" value="ECO:0007669"/>
    <property type="project" value="UniProtKB-KW"/>
</dbReference>
<dbReference type="GO" id="GO:0039660">
    <property type="term" value="F:structural constituent of virion"/>
    <property type="evidence" value="ECO:0007669"/>
    <property type="project" value="UniProtKB-KW"/>
</dbReference>
<dbReference type="GO" id="GO:0046761">
    <property type="term" value="P:viral budding from plasma membrane"/>
    <property type="evidence" value="ECO:0000314"/>
    <property type="project" value="UniProtKB"/>
</dbReference>
<dbReference type="GO" id="GO:0039702">
    <property type="term" value="P:viral budding via host ESCRT complex"/>
    <property type="evidence" value="ECO:0007669"/>
    <property type="project" value="UniProtKB-KW"/>
</dbReference>
<dbReference type="Gene3D" id="2.70.20.60">
    <property type="entry name" value="Viral matrix protein, C-terminal domain"/>
    <property type="match status" value="1"/>
</dbReference>
<dbReference type="Gene3D" id="2.70.20.50">
    <property type="entry name" value="Viral matrix protein, N-terminal domain"/>
    <property type="match status" value="1"/>
</dbReference>
<dbReference type="InterPro" id="IPR042539">
    <property type="entry name" value="Matrix_C"/>
</dbReference>
<dbReference type="InterPro" id="IPR042540">
    <property type="entry name" value="Matrix_N"/>
</dbReference>
<dbReference type="InterPro" id="IPR055413">
    <property type="entry name" value="Matrix_Paramyxo_C"/>
</dbReference>
<dbReference type="InterPro" id="IPR000982">
    <property type="entry name" value="Matrix_Paramyxo_N"/>
</dbReference>
<dbReference type="Pfam" id="PF23765">
    <property type="entry name" value="Matrix_Paramyxo_C"/>
    <property type="match status" value="1"/>
</dbReference>
<dbReference type="Pfam" id="PF00661">
    <property type="entry name" value="Matrix_Paramyxo_N"/>
    <property type="match status" value="1"/>
</dbReference>
<accession>O57299</accession>
<comment type="function">
    <text evidence="1">Plays a crucial role in virion assembly and budding. Forms a shell at the inner face of the plasma membrane and concentrates the HN and F glycoproteins. Acts as a negative regulator for transcription and replication by sticking to the nucleocapsid. This effect might be regulated by the cytoplasmic interaction with tubulin that dissociates the M protein from the nucleocapsid (By similarity).</text>
</comment>
<comment type="subunit">
    <text evidence="2">Homomultimer. Binds to the cytoplasmic regions of F and HN proteins. Interacts with nucleocapsid. Interacts with human alpha-tubulin and beta-tubulin. Interacts with host ANP32B.</text>
</comment>
<comment type="subcellular location">
    <subcellularLocation>
        <location evidence="3">Virion</location>
    </subcellularLocation>
    <subcellularLocation>
        <location evidence="1">Host cytoplasm</location>
    </subcellularLocation>
    <subcellularLocation>
        <location evidence="1">Host cell membrane</location>
        <topology evidence="1">Peripheral membrane protein</topology>
        <orientation evidence="1">Cytoplasmic side</orientation>
    </subcellularLocation>
    <text evidence="1">During bud formation, associates at the inner side of the plasma membrane of infected cells.</text>
</comment>
<comment type="domain">
    <text evidence="1">Late-budding domains (L domains) are short sequence motifs essential for viral particle budding. They recruit proteins of the host ESCRT machinery (Endosomal Sorting Complex Required for Transport) or ESCRT-associated proteins. The matrix protein contains one L domain: a YLDL motif (By similarity).</text>
</comment>
<comment type="PTM">
    <text evidence="1">A large portion is phosphorylated in the cytoplasm, but not in virion. However, this phosphorylation is not essential for virus replication (By similarity).</text>
</comment>
<comment type="similarity">
    <text evidence="3">Belongs to the morbillivirus/respirovirus/rubulavirus M protein family.</text>
</comment>
<evidence type="ECO:0000250" key="1"/>
<evidence type="ECO:0000250" key="2">
    <source>
        <dbReference type="UniProtKB" id="P06446"/>
    </source>
</evidence>
<evidence type="ECO:0000305" key="3"/>
<name>MATRX_SENDO</name>
<organismHost>
    <name type="scientific">Cavia cutleri</name>
    <name type="common">Guinea pig</name>
    <dbReference type="NCBI Taxonomy" id="10144"/>
</organismHost>
<organismHost>
    <name type="scientific">Cricetidae sp.</name>
    <name type="common">Hamster</name>
    <dbReference type="NCBI Taxonomy" id="36483"/>
</organismHost>
<organismHost>
    <name type="scientific">Mus musculus</name>
    <name type="common">Mouse</name>
    <dbReference type="NCBI Taxonomy" id="10090"/>
</organismHost>
<organismHost>
    <name type="scientific">Rattus norvegicus</name>
    <name type="common">Rat</name>
    <dbReference type="NCBI Taxonomy" id="10116"/>
</organismHost>
<gene>
    <name type="primary">M</name>
</gene>
<feature type="chain" id="PRO_0000142775" description="Matrix protein">
    <location>
        <begin position="1"/>
        <end position="348"/>
    </location>
</feature>
<feature type="short sequence motif" description="YLDL motif" evidence="1">
    <location>
        <begin position="50"/>
        <end position="53"/>
    </location>
</feature>
<feature type="modified residue" description="Phosphoserine; by host" evidence="1">
    <location>
        <position position="70"/>
    </location>
</feature>
<keyword id="KW-1032">Host cell membrane</keyword>
<keyword id="KW-1035">Host cytoplasm</keyword>
<keyword id="KW-1043">Host membrane</keyword>
<keyword id="KW-0945">Host-virus interaction</keyword>
<keyword id="KW-0472">Membrane</keyword>
<keyword id="KW-0597">Phosphoprotein</keyword>
<keyword id="KW-1185">Reference proteome</keyword>
<keyword id="KW-1198">Viral budding</keyword>
<keyword id="KW-1187">Viral budding via the host ESCRT complexes</keyword>
<keyword id="KW-0468">Viral matrix protein</keyword>
<keyword id="KW-1188">Viral release from host cell</keyword>
<keyword id="KW-0946">Virion</keyword>
<proteinExistence type="inferred from homology"/>
<reference key="1">
    <citation type="journal article" date="1997" name="J. Gen. Virol.">
        <title>Isolation of an avirulent mutant of Sendai virus with two amino acid mutations from a highly virulent field strain through adaptation to LLC-MK2 cells.</title>
        <authorList>
            <person name="Itoh M."/>
            <person name="Isegawa Y."/>
            <person name="Hotta H."/>
            <person name="Homma M."/>
        </authorList>
    </citation>
    <scope>NUCLEOTIDE SEQUENCE [GENOMIC RNA]</scope>
    <source>
        <strain>Isolate MVC11</strain>
    </source>
</reference>
<sequence length="348" mass="38501">MADIYRFPKFSYEDNGTVEPLPLRTGPDKKAIPHIRIVKVGDPPKHGVRYLDLLLLGFFETPKQTASLGSVSDLTEHTGYSICGSGSLPIGVAKYHGSDQELLKACTDLRITVRRTVRAGEMIVYMVDSIGAPLLPWSGRLRQGMIFNANKVALAPQCLPVDKDIRFRVVFVNGTSLGAITIAKIPKTLADLALPNSISVNLLVTLKTGISTEQKGVLPVLDDQGEKKLNFMVHLGLIRRKVGKIYSVEYCKSKIERMRLIFSLGLIGGISFHVQVTGTLSKTFMGQLAWKRAVCFPLMDVNPHMNLVIWAASVEITDVDAVFQPAIPRDFRYYPNVVAKNIGRIRKL</sequence>